<evidence type="ECO:0000255" key="1">
    <source>
        <dbReference type="HAMAP-Rule" id="MF_00410"/>
    </source>
</evidence>
<evidence type="ECO:0000305" key="2"/>
<organism>
    <name type="scientific">Methanoregula boonei (strain DSM 21154 / JCM 14090 / 6A8)</name>
    <dbReference type="NCBI Taxonomy" id="456442"/>
    <lineage>
        <taxon>Archaea</taxon>
        <taxon>Methanobacteriati</taxon>
        <taxon>Methanobacteriota</taxon>
        <taxon>Stenosarchaea group</taxon>
        <taxon>Methanomicrobia</taxon>
        <taxon>Methanomicrobiales</taxon>
        <taxon>Methanoregulaceae</taxon>
        <taxon>Methanoregula</taxon>
    </lineage>
</organism>
<reference key="1">
    <citation type="journal article" date="2015" name="Microbiology">
        <title>Genome of Methanoregula boonei 6A8 reveals adaptations to oligotrophic peatland environments.</title>
        <authorList>
            <person name="Braeuer S."/>
            <person name="Cadillo-Quiroz H."/>
            <person name="Kyrpides N."/>
            <person name="Woyke T."/>
            <person name="Goodwin L."/>
            <person name="Detter C."/>
            <person name="Podell S."/>
            <person name="Yavitt J.B."/>
            <person name="Zinder S.H."/>
        </authorList>
    </citation>
    <scope>NUCLEOTIDE SEQUENCE [LARGE SCALE GENOMIC DNA]</scope>
    <source>
        <strain>DSM 21154 / JCM 14090 / 6A8</strain>
    </source>
</reference>
<proteinExistence type="inferred from homology"/>
<accession>A7I9I7</accession>
<keyword id="KW-1185">Reference proteome</keyword>
<keyword id="KW-0687">Ribonucleoprotein</keyword>
<keyword id="KW-0689">Ribosomal protein</keyword>
<comment type="similarity">
    <text evidence="1">Belongs to the eukaryotic ribosomal protein eL31 family.</text>
</comment>
<protein>
    <recommendedName>
        <fullName evidence="1">Large ribosomal subunit protein eL31</fullName>
    </recommendedName>
    <alternativeName>
        <fullName evidence="2">50S ribosomal protein L31e</fullName>
    </alternativeName>
</protein>
<sequence>MAEEMKEHIYIIPLRDARRMPRWKRANGAIKDIRKYLAKHMKTEDVKLDKTINEKVWSRGAEKPPSKIRVRAMKMEDGQVQAELALES</sequence>
<dbReference type="EMBL" id="CP000780">
    <property type="protein sequence ID" value="ABS56398.1"/>
    <property type="molecule type" value="Genomic_DNA"/>
</dbReference>
<dbReference type="RefSeq" id="WP_012107451.1">
    <property type="nucleotide sequence ID" value="NC_009712.1"/>
</dbReference>
<dbReference type="SMR" id="A7I9I7"/>
<dbReference type="STRING" id="456442.Mboo_1883"/>
<dbReference type="GeneID" id="5411377"/>
<dbReference type="KEGG" id="mbn:Mboo_1883"/>
<dbReference type="eggNOG" id="arCOG04473">
    <property type="taxonomic scope" value="Archaea"/>
</dbReference>
<dbReference type="HOGENOM" id="CLU_112570_3_2_2"/>
<dbReference type="OrthoDB" id="10127at2157"/>
<dbReference type="Proteomes" id="UP000002408">
    <property type="component" value="Chromosome"/>
</dbReference>
<dbReference type="GO" id="GO:0022625">
    <property type="term" value="C:cytosolic large ribosomal subunit"/>
    <property type="evidence" value="ECO:0007669"/>
    <property type="project" value="TreeGrafter"/>
</dbReference>
<dbReference type="GO" id="GO:0003735">
    <property type="term" value="F:structural constituent of ribosome"/>
    <property type="evidence" value="ECO:0007669"/>
    <property type="project" value="InterPro"/>
</dbReference>
<dbReference type="GO" id="GO:0002181">
    <property type="term" value="P:cytoplasmic translation"/>
    <property type="evidence" value="ECO:0007669"/>
    <property type="project" value="TreeGrafter"/>
</dbReference>
<dbReference type="CDD" id="cd00463">
    <property type="entry name" value="Ribosomal_L31e"/>
    <property type="match status" value="1"/>
</dbReference>
<dbReference type="Gene3D" id="3.10.440.10">
    <property type="match status" value="1"/>
</dbReference>
<dbReference type="HAMAP" id="MF_00410">
    <property type="entry name" value="Ribosomal_eL31"/>
    <property type="match status" value="1"/>
</dbReference>
<dbReference type="InterPro" id="IPR000054">
    <property type="entry name" value="Ribosomal_eL31"/>
</dbReference>
<dbReference type="InterPro" id="IPR020052">
    <property type="entry name" value="Ribosomal_eL31_CS"/>
</dbReference>
<dbReference type="InterPro" id="IPR023621">
    <property type="entry name" value="Ribosomal_eL31_dom_sf"/>
</dbReference>
<dbReference type="NCBIfam" id="NF002258">
    <property type="entry name" value="PRK01192.1-1"/>
    <property type="match status" value="1"/>
</dbReference>
<dbReference type="PANTHER" id="PTHR10956">
    <property type="entry name" value="60S RIBOSOMAL PROTEIN L31"/>
    <property type="match status" value="1"/>
</dbReference>
<dbReference type="PANTHER" id="PTHR10956:SF0">
    <property type="entry name" value="60S RIBOSOMAL PROTEIN L31"/>
    <property type="match status" value="1"/>
</dbReference>
<dbReference type="Pfam" id="PF01198">
    <property type="entry name" value="Ribosomal_L31e"/>
    <property type="match status" value="1"/>
</dbReference>
<dbReference type="SMART" id="SM01380">
    <property type="entry name" value="Ribosomal_L31e"/>
    <property type="match status" value="1"/>
</dbReference>
<dbReference type="SUPFAM" id="SSF54575">
    <property type="entry name" value="Ribosomal protein L31e"/>
    <property type="match status" value="1"/>
</dbReference>
<dbReference type="PROSITE" id="PS01144">
    <property type="entry name" value="RIBOSOMAL_L31E"/>
    <property type="match status" value="1"/>
</dbReference>
<gene>
    <name evidence="1" type="primary">rpl31e</name>
    <name type="ordered locus">Mboo_1883</name>
</gene>
<feature type="chain" id="PRO_1000049912" description="Large ribosomal subunit protein eL31">
    <location>
        <begin position="1"/>
        <end position="88"/>
    </location>
</feature>
<name>RL31_METB6</name>